<sequence length="436" mass="48980">MTKPIVAIVGRPNVGKSTIFNRIVGERVSIVEDTPGVTRDRIYSSGEWLTHDFNIIDTGGIEIGDAPFQTQIRAQAEIAIDEADVIIFMVNVREGLTQSDEMVAQILYKSKKPVVLAVNKVDNMEMRTDVYDFYSLGFGEPYPISGSHGLGLGDLLDAVVSHFGEEEEDPYDEDTIRLSIIGRPNVGKSSLVNAILGEDRVIVSNVAGTTRDAIDTEYSYDGQDYVLIDTAGMRKKGKVYESTEKYSVLRALKAIERSNVVLVVIDAEQGIIEQDKRVAGYAHEQGKAVVIVVNKWDTVEKDSKTMKKFEDEVRKEFQFLDYAQIAFVSAKERTRLRTLFPYINEASENHKKRVQSSTLNEVVTDAISMNPTPTDKGRRLNVFYATQVAIEPPTFVVFVNDVELMHFSYKRYLENQIRAAFGFEGTPIHIIARKRN</sequence>
<reference key="1">
    <citation type="submission" date="2007-06" db="EMBL/GenBank/DDBJ databases">
        <title>Complete sequence of chromosome of Staphylococcus aureus subsp. aureus JH1.</title>
        <authorList>
            <consortium name="US DOE Joint Genome Institute"/>
            <person name="Copeland A."/>
            <person name="Lucas S."/>
            <person name="Lapidus A."/>
            <person name="Barry K."/>
            <person name="Detter J.C."/>
            <person name="Glavina del Rio T."/>
            <person name="Hammon N."/>
            <person name="Israni S."/>
            <person name="Dalin E."/>
            <person name="Tice H."/>
            <person name="Pitluck S."/>
            <person name="Chain P."/>
            <person name="Malfatti S."/>
            <person name="Shin M."/>
            <person name="Vergez L."/>
            <person name="Schmutz J."/>
            <person name="Larimer F."/>
            <person name="Land M."/>
            <person name="Hauser L."/>
            <person name="Kyrpides N."/>
            <person name="Ivanova N."/>
            <person name="Tomasz A."/>
            <person name="Richardson P."/>
        </authorList>
    </citation>
    <scope>NUCLEOTIDE SEQUENCE [LARGE SCALE GENOMIC DNA]</scope>
    <source>
        <strain>JH1</strain>
    </source>
</reference>
<keyword id="KW-0342">GTP-binding</keyword>
<keyword id="KW-0547">Nucleotide-binding</keyword>
<keyword id="KW-0677">Repeat</keyword>
<keyword id="KW-0690">Ribosome biogenesis</keyword>
<protein>
    <recommendedName>
        <fullName evidence="1">GTPase Der</fullName>
    </recommendedName>
    <alternativeName>
        <fullName evidence="1">GTP-binding protein EngA</fullName>
    </alternativeName>
</protein>
<proteinExistence type="inferred from homology"/>
<evidence type="ECO:0000255" key="1">
    <source>
        <dbReference type="HAMAP-Rule" id="MF_00195"/>
    </source>
</evidence>
<name>DER_STAA2</name>
<feature type="chain" id="PRO_1000077676" description="GTPase Der">
    <location>
        <begin position="1"/>
        <end position="436"/>
    </location>
</feature>
<feature type="domain" description="EngA-type G 1">
    <location>
        <begin position="4"/>
        <end position="167"/>
    </location>
</feature>
<feature type="domain" description="EngA-type G 2">
    <location>
        <begin position="176"/>
        <end position="351"/>
    </location>
</feature>
<feature type="domain" description="KH-like" evidence="1">
    <location>
        <begin position="352"/>
        <end position="436"/>
    </location>
</feature>
<feature type="binding site" evidence="1">
    <location>
        <begin position="10"/>
        <end position="17"/>
    </location>
    <ligand>
        <name>GTP</name>
        <dbReference type="ChEBI" id="CHEBI:37565"/>
        <label>1</label>
    </ligand>
</feature>
<feature type="binding site" evidence="1">
    <location>
        <begin position="57"/>
        <end position="61"/>
    </location>
    <ligand>
        <name>GTP</name>
        <dbReference type="ChEBI" id="CHEBI:37565"/>
        <label>1</label>
    </ligand>
</feature>
<feature type="binding site" evidence="1">
    <location>
        <begin position="119"/>
        <end position="122"/>
    </location>
    <ligand>
        <name>GTP</name>
        <dbReference type="ChEBI" id="CHEBI:37565"/>
        <label>1</label>
    </ligand>
</feature>
<feature type="binding site" evidence="1">
    <location>
        <begin position="182"/>
        <end position="189"/>
    </location>
    <ligand>
        <name>GTP</name>
        <dbReference type="ChEBI" id="CHEBI:37565"/>
        <label>2</label>
    </ligand>
</feature>
<feature type="binding site" evidence="1">
    <location>
        <begin position="229"/>
        <end position="233"/>
    </location>
    <ligand>
        <name>GTP</name>
        <dbReference type="ChEBI" id="CHEBI:37565"/>
        <label>2</label>
    </ligand>
</feature>
<feature type="binding site" evidence="1">
    <location>
        <begin position="294"/>
        <end position="297"/>
    </location>
    <ligand>
        <name>GTP</name>
        <dbReference type="ChEBI" id="CHEBI:37565"/>
        <label>2</label>
    </ligand>
</feature>
<dbReference type="EMBL" id="CP000736">
    <property type="protein sequence ID" value="ABR52411.1"/>
    <property type="molecule type" value="Genomic_DNA"/>
</dbReference>
<dbReference type="SMR" id="A6U1U3"/>
<dbReference type="KEGG" id="sah:SaurJH1_1562"/>
<dbReference type="HOGENOM" id="CLU_016077_6_2_9"/>
<dbReference type="GO" id="GO:0005525">
    <property type="term" value="F:GTP binding"/>
    <property type="evidence" value="ECO:0007669"/>
    <property type="project" value="UniProtKB-UniRule"/>
</dbReference>
<dbReference type="GO" id="GO:0043022">
    <property type="term" value="F:ribosome binding"/>
    <property type="evidence" value="ECO:0007669"/>
    <property type="project" value="TreeGrafter"/>
</dbReference>
<dbReference type="GO" id="GO:0042254">
    <property type="term" value="P:ribosome biogenesis"/>
    <property type="evidence" value="ECO:0007669"/>
    <property type="project" value="UniProtKB-KW"/>
</dbReference>
<dbReference type="CDD" id="cd01894">
    <property type="entry name" value="EngA1"/>
    <property type="match status" value="1"/>
</dbReference>
<dbReference type="CDD" id="cd01895">
    <property type="entry name" value="EngA2"/>
    <property type="match status" value="1"/>
</dbReference>
<dbReference type="FunFam" id="3.30.300.20:FF:000004">
    <property type="entry name" value="GTPase Der"/>
    <property type="match status" value="1"/>
</dbReference>
<dbReference type="FunFam" id="3.40.50.300:FF:000040">
    <property type="entry name" value="GTPase Der"/>
    <property type="match status" value="1"/>
</dbReference>
<dbReference type="FunFam" id="3.40.50.300:FF:000057">
    <property type="entry name" value="GTPase Der"/>
    <property type="match status" value="1"/>
</dbReference>
<dbReference type="Gene3D" id="3.30.300.20">
    <property type="match status" value="1"/>
</dbReference>
<dbReference type="Gene3D" id="3.40.50.300">
    <property type="entry name" value="P-loop containing nucleotide triphosphate hydrolases"/>
    <property type="match status" value="2"/>
</dbReference>
<dbReference type="HAMAP" id="MF_00195">
    <property type="entry name" value="GTPase_Der"/>
    <property type="match status" value="1"/>
</dbReference>
<dbReference type="InterPro" id="IPR031166">
    <property type="entry name" value="G_ENGA"/>
</dbReference>
<dbReference type="InterPro" id="IPR006073">
    <property type="entry name" value="GTP-bd"/>
</dbReference>
<dbReference type="InterPro" id="IPR016484">
    <property type="entry name" value="GTPase_Der"/>
</dbReference>
<dbReference type="InterPro" id="IPR032859">
    <property type="entry name" value="KH_dom-like"/>
</dbReference>
<dbReference type="InterPro" id="IPR015946">
    <property type="entry name" value="KH_dom-like_a/b"/>
</dbReference>
<dbReference type="InterPro" id="IPR027417">
    <property type="entry name" value="P-loop_NTPase"/>
</dbReference>
<dbReference type="InterPro" id="IPR005225">
    <property type="entry name" value="Small_GTP-bd"/>
</dbReference>
<dbReference type="NCBIfam" id="TIGR03594">
    <property type="entry name" value="GTPase_EngA"/>
    <property type="match status" value="1"/>
</dbReference>
<dbReference type="NCBIfam" id="TIGR00231">
    <property type="entry name" value="small_GTP"/>
    <property type="match status" value="2"/>
</dbReference>
<dbReference type="PANTHER" id="PTHR43834">
    <property type="entry name" value="GTPASE DER"/>
    <property type="match status" value="1"/>
</dbReference>
<dbReference type="PANTHER" id="PTHR43834:SF6">
    <property type="entry name" value="GTPASE DER"/>
    <property type="match status" value="1"/>
</dbReference>
<dbReference type="Pfam" id="PF14714">
    <property type="entry name" value="KH_dom-like"/>
    <property type="match status" value="1"/>
</dbReference>
<dbReference type="Pfam" id="PF01926">
    <property type="entry name" value="MMR_HSR1"/>
    <property type="match status" value="2"/>
</dbReference>
<dbReference type="PIRSF" id="PIRSF006485">
    <property type="entry name" value="GTP-binding_EngA"/>
    <property type="match status" value="1"/>
</dbReference>
<dbReference type="PRINTS" id="PR00326">
    <property type="entry name" value="GTP1OBG"/>
</dbReference>
<dbReference type="SUPFAM" id="SSF52540">
    <property type="entry name" value="P-loop containing nucleoside triphosphate hydrolases"/>
    <property type="match status" value="2"/>
</dbReference>
<dbReference type="PROSITE" id="PS51712">
    <property type="entry name" value="G_ENGA"/>
    <property type="match status" value="2"/>
</dbReference>
<accession>A6U1U3</accession>
<gene>
    <name evidence="1" type="primary">der</name>
    <name type="synonym">engA</name>
    <name type="ordered locus">SaurJH1_1562</name>
</gene>
<organism>
    <name type="scientific">Staphylococcus aureus (strain JH1)</name>
    <dbReference type="NCBI Taxonomy" id="359787"/>
    <lineage>
        <taxon>Bacteria</taxon>
        <taxon>Bacillati</taxon>
        <taxon>Bacillota</taxon>
        <taxon>Bacilli</taxon>
        <taxon>Bacillales</taxon>
        <taxon>Staphylococcaceae</taxon>
        <taxon>Staphylococcus</taxon>
    </lineage>
</organism>
<comment type="function">
    <text evidence="1">GTPase that plays an essential role in the late steps of ribosome biogenesis.</text>
</comment>
<comment type="subunit">
    <text evidence="1">Associates with the 50S ribosomal subunit.</text>
</comment>
<comment type="similarity">
    <text evidence="1">Belongs to the TRAFAC class TrmE-Era-EngA-EngB-Septin-like GTPase superfamily. EngA (Der) GTPase family.</text>
</comment>